<feature type="chain" id="PRO_0000386805" description="Ribosomal RNA small subunit methyltransferase H">
    <location>
        <begin position="1"/>
        <end position="331"/>
    </location>
</feature>
<feature type="binding site" evidence="1">
    <location>
        <begin position="56"/>
        <end position="58"/>
    </location>
    <ligand>
        <name>S-adenosyl-L-methionine</name>
        <dbReference type="ChEBI" id="CHEBI:59789"/>
    </ligand>
</feature>
<feature type="binding site" evidence="1">
    <location>
        <position position="76"/>
    </location>
    <ligand>
        <name>S-adenosyl-L-methionine</name>
        <dbReference type="ChEBI" id="CHEBI:59789"/>
    </ligand>
</feature>
<feature type="binding site" evidence="1">
    <location>
        <position position="100"/>
    </location>
    <ligand>
        <name>S-adenosyl-L-methionine</name>
        <dbReference type="ChEBI" id="CHEBI:59789"/>
    </ligand>
</feature>
<feature type="binding site" evidence="1">
    <location>
        <position position="122"/>
    </location>
    <ligand>
        <name>S-adenosyl-L-methionine</name>
        <dbReference type="ChEBI" id="CHEBI:59789"/>
    </ligand>
</feature>
<feature type="binding site" evidence="1">
    <location>
        <position position="129"/>
    </location>
    <ligand>
        <name>S-adenosyl-L-methionine</name>
        <dbReference type="ChEBI" id="CHEBI:59789"/>
    </ligand>
</feature>
<sequence length="331" mass="36749">MQHRDNPEKAPLSDAPTVVEDRAADYRHASVLLDGAVEALMTDPDGCYLDGTFGRGGHSRAILQRLSPQGRLLAIDRDPAALAEGATWDDPRFTLRHGRFAELDDIARDAALHRRLSGVLLDVGVSSPQLDDASRGFSFLRDGPLDMRMDPTQGESAADWLARVSERDMSDVFKRYGEERFARRIAKAIVARRGERPITHTADLAELVKAAHPAWEKGKHPATRVFQAIRIHVNGELDQLEAALAAALESLAPGGRLVVISFHSLEDRLVKRFIRDKVRGDTHLPRDLPIRDTQLNRRLAMVGKARRPDEDEIALNPRARSAVMRVAQKLG</sequence>
<name>RSMH_CHRSD</name>
<protein>
    <recommendedName>
        <fullName evidence="1">Ribosomal RNA small subunit methyltransferase H</fullName>
        <ecNumber evidence="1">2.1.1.199</ecNumber>
    </recommendedName>
    <alternativeName>
        <fullName evidence="1">16S rRNA m(4)C1402 methyltransferase</fullName>
    </alternativeName>
    <alternativeName>
        <fullName evidence="1">rRNA (cytosine-N(4)-)-methyltransferase RsmH</fullName>
    </alternativeName>
</protein>
<proteinExistence type="inferred from homology"/>
<accession>Q1QVF9</accession>
<evidence type="ECO:0000255" key="1">
    <source>
        <dbReference type="HAMAP-Rule" id="MF_01007"/>
    </source>
</evidence>
<gene>
    <name evidence="1" type="primary">rsmH</name>
    <name type="synonym">mraW</name>
    <name type="ordered locus">Csal_2198</name>
</gene>
<organism>
    <name type="scientific">Chromohalobacter salexigens (strain ATCC BAA-138 / DSM 3043 / CIP 106854 / NCIMB 13768 / 1H11)</name>
    <dbReference type="NCBI Taxonomy" id="290398"/>
    <lineage>
        <taxon>Bacteria</taxon>
        <taxon>Pseudomonadati</taxon>
        <taxon>Pseudomonadota</taxon>
        <taxon>Gammaproteobacteria</taxon>
        <taxon>Oceanospirillales</taxon>
        <taxon>Halomonadaceae</taxon>
        <taxon>Chromohalobacter</taxon>
    </lineage>
</organism>
<dbReference type="EC" id="2.1.1.199" evidence="1"/>
<dbReference type="EMBL" id="CP000285">
    <property type="protein sequence ID" value="ABE59549.1"/>
    <property type="molecule type" value="Genomic_DNA"/>
</dbReference>
<dbReference type="RefSeq" id="WP_011507495.1">
    <property type="nucleotide sequence ID" value="NC_007963.1"/>
</dbReference>
<dbReference type="SMR" id="Q1QVF9"/>
<dbReference type="STRING" id="290398.Csal_2198"/>
<dbReference type="GeneID" id="95334916"/>
<dbReference type="KEGG" id="csa:Csal_2198"/>
<dbReference type="eggNOG" id="COG0275">
    <property type="taxonomic scope" value="Bacteria"/>
</dbReference>
<dbReference type="HOGENOM" id="CLU_038422_2_0_6"/>
<dbReference type="Proteomes" id="UP000000239">
    <property type="component" value="Chromosome"/>
</dbReference>
<dbReference type="GO" id="GO:0005737">
    <property type="term" value="C:cytoplasm"/>
    <property type="evidence" value="ECO:0007669"/>
    <property type="project" value="UniProtKB-SubCell"/>
</dbReference>
<dbReference type="GO" id="GO:0071424">
    <property type="term" value="F:rRNA (cytosine-N4-)-methyltransferase activity"/>
    <property type="evidence" value="ECO:0007669"/>
    <property type="project" value="UniProtKB-UniRule"/>
</dbReference>
<dbReference type="GO" id="GO:0070475">
    <property type="term" value="P:rRNA base methylation"/>
    <property type="evidence" value="ECO:0007669"/>
    <property type="project" value="UniProtKB-UniRule"/>
</dbReference>
<dbReference type="FunFam" id="1.10.150.170:FF:000001">
    <property type="entry name" value="Ribosomal RNA small subunit methyltransferase H"/>
    <property type="match status" value="1"/>
</dbReference>
<dbReference type="Gene3D" id="1.10.150.170">
    <property type="entry name" value="Putative methyltransferase TM0872, insert domain"/>
    <property type="match status" value="1"/>
</dbReference>
<dbReference type="Gene3D" id="3.40.50.150">
    <property type="entry name" value="Vaccinia Virus protein VP39"/>
    <property type="match status" value="1"/>
</dbReference>
<dbReference type="HAMAP" id="MF_01007">
    <property type="entry name" value="16SrRNA_methyltr_H"/>
    <property type="match status" value="1"/>
</dbReference>
<dbReference type="InterPro" id="IPR002903">
    <property type="entry name" value="RsmH"/>
</dbReference>
<dbReference type="InterPro" id="IPR023397">
    <property type="entry name" value="SAM-dep_MeTrfase_MraW_recog"/>
</dbReference>
<dbReference type="InterPro" id="IPR029063">
    <property type="entry name" value="SAM-dependent_MTases_sf"/>
</dbReference>
<dbReference type="NCBIfam" id="TIGR00006">
    <property type="entry name" value="16S rRNA (cytosine(1402)-N(4))-methyltransferase RsmH"/>
    <property type="match status" value="1"/>
</dbReference>
<dbReference type="PANTHER" id="PTHR11265:SF0">
    <property type="entry name" value="12S RRNA N4-METHYLCYTIDINE METHYLTRANSFERASE"/>
    <property type="match status" value="1"/>
</dbReference>
<dbReference type="PANTHER" id="PTHR11265">
    <property type="entry name" value="S-ADENOSYL-METHYLTRANSFERASE MRAW"/>
    <property type="match status" value="1"/>
</dbReference>
<dbReference type="Pfam" id="PF01795">
    <property type="entry name" value="Methyltransf_5"/>
    <property type="match status" value="1"/>
</dbReference>
<dbReference type="PIRSF" id="PIRSF004486">
    <property type="entry name" value="MraW"/>
    <property type="match status" value="1"/>
</dbReference>
<dbReference type="SUPFAM" id="SSF81799">
    <property type="entry name" value="Putative methyltransferase TM0872, insert domain"/>
    <property type="match status" value="1"/>
</dbReference>
<dbReference type="SUPFAM" id="SSF53335">
    <property type="entry name" value="S-adenosyl-L-methionine-dependent methyltransferases"/>
    <property type="match status" value="1"/>
</dbReference>
<keyword id="KW-0963">Cytoplasm</keyword>
<keyword id="KW-0489">Methyltransferase</keyword>
<keyword id="KW-1185">Reference proteome</keyword>
<keyword id="KW-0698">rRNA processing</keyword>
<keyword id="KW-0949">S-adenosyl-L-methionine</keyword>
<keyword id="KW-0808">Transferase</keyword>
<comment type="function">
    <text evidence="1">Specifically methylates the N4 position of cytidine in position 1402 (C1402) of 16S rRNA.</text>
</comment>
<comment type="catalytic activity">
    <reaction evidence="1">
        <text>cytidine(1402) in 16S rRNA + S-adenosyl-L-methionine = N(4)-methylcytidine(1402) in 16S rRNA + S-adenosyl-L-homocysteine + H(+)</text>
        <dbReference type="Rhea" id="RHEA:42928"/>
        <dbReference type="Rhea" id="RHEA-COMP:10286"/>
        <dbReference type="Rhea" id="RHEA-COMP:10287"/>
        <dbReference type="ChEBI" id="CHEBI:15378"/>
        <dbReference type="ChEBI" id="CHEBI:57856"/>
        <dbReference type="ChEBI" id="CHEBI:59789"/>
        <dbReference type="ChEBI" id="CHEBI:74506"/>
        <dbReference type="ChEBI" id="CHEBI:82748"/>
        <dbReference type="EC" id="2.1.1.199"/>
    </reaction>
</comment>
<comment type="subcellular location">
    <subcellularLocation>
        <location evidence="1">Cytoplasm</location>
    </subcellularLocation>
</comment>
<comment type="similarity">
    <text evidence="1">Belongs to the methyltransferase superfamily. RsmH family.</text>
</comment>
<reference key="1">
    <citation type="journal article" date="2011" name="Stand. Genomic Sci.">
        <title>Complete genome sequence of the halophilic and highly halotolerant Chromohalobacter salexigens type strain (1H11(T)).</title>
        <authorList>
            <person name="Copeland A."/>
            <person name="O'Connor K."/>
            <person name="Lucas S."/>
            <person name="Lapidus A."/>
            <person name="Berry K.W."/>
            <person name="Detter J.C."/>
            <person name="Del Rio T.G."/>
            <person name="Hammon N."/>
            <person name="Dalin E."/>
            <person name="Tice H."/>
            <person name="Pitluck S."/>
            <person name="Bruce D."/>
            <person name="Goodwin L."/>
            <person name="Han C."/>
            <person name="Tapia R."/>
            <person name="Saunders E."/>
            <person name="Schmutz J."/>
            <person name="Brettin T."/>
            <person name="Larimer F."/>
            <person name="Land M."/>
            <person name="Hauser L."/>
            <person name="Vargas C."/>
            <person name="Nieto J.J."/>
            <person name="Kyrpides N.C."/>
            <person name="Ivanova N."/>
            <person name="Goker M."/>
            <person name="Klenk H.P."/>
            <person name="Csonka L.N."/>
            <person name="Woyke T."/>
        </authorList>
    </citation>
    <scope>NUCLEOTIDE SEQUENCE [LARGE SCALE GENOMIC DNA]</scope>
    <source>
        <strain>ATCC BAA-138 / DSM 3043 / CIP 106854 / NCIMB 13768 / 1H11</strain>
    </source>
</reference>